<proteinExistence type="inferred from homology"/>
<reference key="1">
    <citation type="journal article" date="2000" name="Nucleic Acids Res.">
        <title>Genome sequences of Chlamydia trachomatis MoPn and Chlamydia pneumoniae AR39.</title>
        <authorList>
            <person name="Read T.D."/>
            <person name="Brunham R.C."/>
            <person name="Shen C."/>
            <person name="Gill S.R."/>
            <person name="Heidelberg J.F."/>
            <person name="White O."/>
            <person name="Hickey E.K."/>
            <person name="Peterson J.D."/>
            <person name="Utterback T.R."/>
            <person name="Berry K.J."/>
            <person name="Bass S."/>
            <person name="Linher K.D."/>
            <person name="Weidman J.F."/>
            <person name="Khouri H.M."/>
            <person name="Craven B."/>
            <person name="Bowman C."/>
            <person name="Dodson R.J."/>
            <person name="Gwinn M.L."/>
            <person name="Nelson W.C."/>
            <person name="DeBoy R.T."/>
            <person name="Kolonay J.F."/>
            <person name="McClarty G."/>
            <person name="Salzberg S.L."/>
            <person name="Eisen J.A."/>
            <person name="Fraser C.M."/>
        </authorList>
    </citation>
    <scope>NUCLEOTIDE SEQUENCE [LARGE SCALE GENOMIC DNA]</scope>
    <source>
        <strain>MoPn / Nigg</strain>
    </source>
</reference>
<sequence length="270" mass="29408">MLTDKKSSPTWSSLLPSETSQYFVFGNWKMNKTFSEAQTFLKDFVSCEILSNPKIITGIIPPFTLLSSCQQIIKNTPIRLGAQTLHEVDSGAFTGEISAPMLKDIGVDFVLIGHSERRHIFHEQNHSLAEKLLAAIRNGIVPVLCIGETLEEQEAGATQDILLEQLTVGLSRLPEHAPFILAYEPVWAIGTGKVANPDLVQEIHAFCRNVVKDLISKDAAERTPILYGGSVKADNTRALTLCPDVNGLLVGGASLSVESFLAIIQQIAVS</sequence>
<protein>
    <recommendedName>
        <fullName evidence="1">Triosephosphate isomerase</fullName>
        <shortName evidence="1">TIM</shortName>
        <shortName evidence="1">TPI</shortName>
        <ecNumber evidence="1">5.3.1.1</ecNumber>
    </recommendedName>
    <alternativeName>
        <fullName evidence="1">Triose-phosphate isomerase</fullName>
    </alternativeName>
</protein>
<feature type="chain" id="PRO_0000090204" description="Triosephosphate isomerase">
    <location>
        <begin position="1"/>
        <end position="270"/>
    </location>
</feature>
<feature type="active site" description="Electrophile" evidence="1">
    <location>
        <position position="114"/>
    </location>
</feature>
<feature type="active site" description="Proton acceptor" evidence="1">
    <location>
        <position position="184"/>
    </location>
</feature>
<feature type="binding site" evidence="1">
    <location>
        <begin position="27"/>
        <end position="29"/>
    </location>
    <ligand>
        <name>substrate</name>
    </ligand>
</feature>
<feature type="binding site" evidence="1">
    <location>
        <position position="190"/>
    </location>
    <ligand>
        <name>substrate</name>
    </ligand>
</feature>
<feature type="binding site" evidence="1">
    <location>
        <position position="230"/>
    </location>
    <ligand>
        <name>substrate</name>
    </ligand>
</feature>
<feature type="binding site" evidence="1">
    <location>
        <begin position="251"/>
        <end position="252"/>
    </location>
    <ligand>
        <name>substrate</name>
    </ligand>
</feature>
<keyword id="KW-0963">Cytoplasm</keyword>
<keyword id="KW-0312">Gluconeogenesis</keyword>
<keyword id="KW-0324">Glycolysis</keyword>
<keyword id="KW-0413">Isomerase</keyword>
<organism>
    <name type="scientific">Chlamydia muridarum (strain MoPn / Nigg)</name>
    <dbReference type="NCBI Taxonomy" id="243161"/>
    <lineage>
        <taxon>Bacteria</taxon>
        <taxon>Pseudomonadati</taxon>
        <taxon>Chlamydiota</taxon>
        <taxon>Chlamydiia</taxon>
        <taxon>Chlamydiales</taxon>
        <taxon>Chlamydiaceae</taxon>
        <taxon>Chlamydia/Chlamydophila group</taxon>
        <taxon>Chlamydia</taxon>
    </lineage>
</organism>
<dbReference type="EC" id="5.3.1.1" evidence="1"/>
<dbReference type="EMBL" id="AE002160">
    <property type="protein sequence ID" value="AAF39435.1"/>
    <property type="molecule type" value="Genomic_DNA"/>
</dbReference>
<dbReference type="PIR" id="A81684">
    <property type="entry name" value="A81684"/>
</dbReference>
<dbReference type="RefSeq" id="WP_010230963.1">
    <property type="nucleotide sequence ID" value="NZ_CP063055.1"/>
</dbReference>
<dbReference type="SMR" id="Q9PK66"/>
<dbReference type="GeneID" id="1245966"/>
<dbReference type="KEGG" id="cmu:TC_0604"/>
<dbReference type="eggNOG" id="COG0149">
    <property type="taxonomic scope" value="Bacteria"/>
</dbReference>
<dbReference type="HOGENOM" id="CLU_024251_2_3_0"/>
<dbReference type="OrthoDB" id="9809429at2"/>
<dbReference type="UniPathway" id="UPA00109">
    <property type="reaction ID" value="UER00189"/>
</dbReference>
<dbReference type="UniPathway" id="UPA00138"/>
<dbReference type="Proteomes" id="UP000000800">
    <property type="component" value="Chromosome"/>
</dbReference>
<dbReference type="GO" id="GO:0005829">
    <property type="term" value="C:cytosol"/>
    <property type="evidence" value="ECO:0007669"/>
    <property type="project" value="TreeGrafter"/>
</dbReference>
<dbReference type="GO" id="GO:0004807">
    <property type="term" value="F:triose-phosphate isomerase activity"/>
    <property type="evidence" value="ECO:0007669"/>
    <property type="project" value="UniProtKB-UniRule"/>
</dbReference>
<dbReference type="GO" id="GO:0006094">
    <property type="term" value="P:gluconeogenesis"/>
    <property type="evidence" value="ECO:0007669"/>
    <property type="project" value="UniProtKB-UniRule"/>
</dbReference>
<dbReference type="GO" id="GO:0046166">
    <property type="term" value="P:glyceraldehyde-3-phosphate biosynthetic process"/>
    <property type="evidence" value="ECO:0007669"/>
    <property type="project" value="TreeGrafter"/>
</dbReference>
<dbReference type="GO" id="GO:0019563">
    <property type="term" value="P:glycerol catabolic process"/>
    <property type="evidence" value="ECO:0007669"/>
    <property type="project" value="TreeGrafter"/>
</dbReference>
<dbReference type="GO" id="GO:0006096">
    <property type="term" value="P:glycolytic process"/>
    <property type="evidence" value="ECO:0007669"/>
    <property type="project" value="UniProtKB-UniRule"/>
</dbReference>
<dbReference type="CDD" id="cd00311">
    <property type="entry name" value="TIM"/>
    <property type="match status" value="1"/>
</dbReference>
<dbReference type="FunFam" id="3.20.20.70:FF:000016">
    <property type="entry name" value="Triosephosphate isomerase"/>
    <property type="match status" value="1"/>
</dbReference>
<dbReference type="Gene3D" id="3.20.20.70">
    <property type="entry name" value="Aldolase class I"/>
    <property type="match status" value="1"/>
</dbReference>
<dbReference type="HAMAP" id="MF_00147_B">
    <property type="entry name" value="TIM_B"/>
    <property type="match status" value="1"/>
</dbReference>
<dbReference type="InterPro" id="IPR013785">
    <property type="entry name" value="Aldolase_TIM"/>
</dbReference>
<dbReference type="InterPro" id="IPR035990">
    <property type="entry name" value="TIM_sf"/>
</dbReference>
<dbReference type="InterPro" id="IPR022896">
    <property type="entry name" value="TrioseP_Isoase_bac/euk"/>
</dbReference>
<dbReference type="InterPro" id="IPR000652">
    <property type="entry name" value="Triosephosphate_isomerase"/>
</dbReference>
<dbReference type="InterPro" id="IPR020861">
    <property type="entry name" value="Triosephosphate_isomerase_AS"/>
</dbReference>
<dbReference type="NCBIfam" id="TIGR00419">
    <property type="entry name" value="tim"/>
    <property type="match status" value="1"/>
</dbReference>
<dbReference type="PANTHER" id="PTHR21139">
    <property type="entry name" value="TRIOSEPHOSPHATE ISOMERASE"/>
    <property type="match status" value="1"/>
</dbReference>
<dbReference type="PANTHER" id="PTHR21139:SF42">
    <property type="entry name" value="TRIOSEPHOSPHATE ISOMERASE"/>
    <property type="match status" value="1"/>
</dbReference>
<dbReference type="Pfam" id="PF00121">
    <property type="entry name" value="TIM"/>
    <property type="match status" value="1"/>
</dbReference>
<dbReference type="SUPFAM" id="SSF51351">
    <property type="entry name" value="Triosephosphate isomerase (TIM)"/>
    <property type="match status" value="1"/>
</dbReference>
<dbReference type="PROSITE" id="PS00171">
    <property type="entry name" value="TIM_1"/>
    <property type="match status" value="1"/>
</dbReference>
<dbReference type="PROSITE" id="PS51440">
    <property type="entry name" value="TIM_2"/>
    <property type="match status" value="1"/>
</dbReference>
<accession>Q9PK66</accession>
<name>TPIS_CHLMU</name>
<comment type="function">
    <text evidence="1">Involved in the gluconeogenesis. Catalyzes stereospecifically the conversion of dihydroxyacetone phosphate (DHAP) to D-glyceraldehyde-3-phosphate (G3P).</text>
</comment>
<comment type="catalytic activity">
    <reaction evidence="1">
        <text>D-glyceraldehyde 3-phosphate = dihydroxyacetone phosphate</text>
        <dbReference type="Rhea" id="RHEA:18585"/>
        <dbReference type="ChEBI" id="CHEBI:57642"/>
        <dbReference type="ChEBI" id="CHEBI:59776"/>
        <dbReference type="EC" id="5.3.1.1"/>
    </reaction>
</comment>
<comment type="pathway">
    <text evidence="1">Carbohydrate biosynthesis; gluconeogenesis.</text>
</comment>
<comment type="pathway">
    <text evidence="1">Carbohydrate degradation; glycolysis; D-glyceraldehyde 3-phosphate from glycerone phosphate: step 1/1.</text>
</comment>
<comment type="subunit">
    <text evidence="1">Homodimer.</text>
</comment>
<comment type="subcellular location">
    <subcellularLocation>
        <location evidence="1">Cytoplasm</location>
    </subcellularLocation>
</comment>
<comment type="similarity">
    <text evidence="1">Belongs to the triosephosphate isomerase family.</text>
</comment>
<gene>
    <name evidence="1" type="primary">tpiA</name>
    <name type="synonym">tpi</name>
    <name type="ordered locus">TC_0604</name>
</gene>
<evidence type="ECO:0000255" key="1">
    <source>
        <dbReference type="HAMAP-Rule" id="MF_00147"/>
    </source>
</evidence>